<accession>A4W9L0</accession>
<sequence length="252" mass="27750">MDKLLIVNADDFGLSKGQNYGIVEACRHGVVASTTAMVNGEAVEHAAALSRELPGLGVGMHFVLTLGMPLSPMPGLTRSGQLGKWIWQMAEQGTLPLDEIARELDCQFNRFVDLFGREPTHIDSHHHVHMIPAIFPLVAQFAARKGVAMRVDRQVQASHDLTLSRAPTTQGYSSDFYGDEISETLFLQVLDASAARGEQSFEMMAHPAFVDNTVRKSAYCWSRLAELDVLTSPSLKYAIAERGYRLGSFLDL</sequence>
<name>CHBG_ENT38</name>
<comment type="function">
    <text evidence="1">Involved in the degradation of chitin. ChbG is essential for growth on the acetylated chitooligosaccharides chitobiose and chitotriose but is dispensable for growth on cellobiose and chitosan dimer, the deacetylated form of chitobiose. Deacetylation of chitobiose-6-P and chitotriose-6-P is necessary for both the activation of the chb promoter by the regulatory protein ChbR and the hydrolysis of phosphorylated beta-glucosides by the phospho-beta-glucosidase ChbF. Catalyzes the removal of only one acetyl group from chitobiose-6-P to yield monoacetylchitobiose-6-P, the inducer of ChbR and the substrate of ChbF.</text>
</comment>
<comment type="catalytic activity">
    <reaction evidence="1">
        <text>N,N'-diacetylchitobiose + H2O = N-acetyl-beta-D-glucosaminyl-(1-&gt;4)-D-glucosamine + acetate</text>
        <dbReference type="Rhea" id="RHEA:27469"/>
        <dbReference type="ChEBI" id="CHEBI:15377"/>
        <dbReference type="ChEBI" id="CHEBI:28681"/>
        <dbReference type="ChEBI" id="CHEBI:30089"/>
        <dbReference type="ChEBI" id="CHEBI:59910"/>
        <dbReference type="EC" id="3.5.1.105"/>
    </reaction>
</comment>
<comment type="catalytic activity">
    <reaction evidence="1">
        <text>diacetylchitobiose-6'-phosphate + H2O = N'-monoacetylchitobiose-6'-phosphate + acetate</text>
        <dbReference type="Rhea" id="RHEA:35083"/>
        <dbReference type="ChEBI" id="CHEBI:15377"/>
        <dbReference type="ChEBI" id="CHEBI:30089"/>
        <dbReference type="ChEBI" id="CHEBI:64883"/>
        <dbReference type="ChEBI" id="CHEBI:71315"/>
    </reaction>
</comment>
<comment type="cofactor">
    <cofactor evidence="1">
        <name>Mg(2+)</name>
        <dbReference type="ChEBI" id="CHEBI:18420"/>
    </cofactor>
</comment>
<comment type="pathway">
    <text evidence="1">Glycan degradation; chitin degradation.</text>
</comment>
<comment type="subunit">
    <text evidence="1">Homodimer.</text>
</comment>
<comment type="subcellular location">
    <subcellularLocation>
        <location evidence="1">Cytoplasm</location>
    </subcellularLocation>
</comment>
<comment type="similarity">
    <text evidence="1">Belongs to the YdjC deacetylase family. ChbG subfamily.</text>
</comment>
<protein>
    <recommendedName>
        <fullName evidence="1">Chitooligosaccharide deacetylase</fullName>
        <shortName evidence="1">COD</shortName>
        <ecNumber evidence="1">3.5.1.105</ecNumber>
    </recommendedName>
    <alternativeName>
        <fullName evidence="1">Chitin disaccharide deacetylase</fullName>
    </alternativeName>
    <alternativeName>
        <fullName evidence="1">Chitobiose deacetylase</fullName>
    </alternativeName>
    <alternativeName>
        <fullName evidence="1">Chitobiose-6P deacetylase</fullName>
    </alternativeName>
    <alternativeName>
        <fullName evidence="1">Chitotriose deacetylase</fullName>
    </alternativeName>
    <alternativeName>
        <fullName evidence="1">Chitotriose-6P deacetylase</fullName>
    </alternativeName>
</protein>
<keyword id="KW-0119">Carbohydrate metabolism</keyword>
<keyword id="KW-0146">Chitin degradation</keyword>
<keyword id="KW-0963">Cytoplasm</keyword>
<keyword id="KW-0378">Hydrolase</keyword>
<keyword id="KW-0460">Magnesium</keyword>
<keyword id="KW-0479">Metal-binding</keyword>
<keyword id="KW-0624">Polysaccharide degradation</keyword>
<proteinExistence type="inferred from homology"/>
<organism>
    <name type="scientific">Enterobacter sp. (strain 638)</name>
    <dbReference type="NCBI Taxonomy" id="399742"/>
    <lineage>
        <taxon>Bacteria</taxon>
        <taxon>Pseudomonadati</taxon>
        <taxon>Pseudomonadota</taxon>
        <taxon>Gammaproteobacteria</taxon>
        <taxon>Enterobacterales</taxon>
        <taxon>Enterobacteriaceae</taxon>
        <taxon>Enterobacter</taxon>
    </lineage>
</organism>
<evidence type="ECO:0000255" key="1">
    <source>
        <dbReference type="HAMAP-Rule" id="MF_01246"/>
    </source>
</evidence>
<reference key="1">
    <citation type="journal article" date="2010" name="PLoS Genet.">
        <title>Genome sequence of the plant growth promoting endophytic bacterium Enterobacter sp. 638.</title>
        <authorList>
            <person name="Taghavi S."/>
            <person name="van der Lelie D."/>
            <person name="Hoffman A."/>
            <person name="Zhang Y.B."/>
            <person name="Walla M.D."/>
            <person name="Vangronsveld J."/>
            <person name="Newman L."/>
            <person name="Monchy S."/>
        </authorList>
    </citation>
    <scope>NUCLEOTIDE SEQUENCE [LARGE SCALE GENOMIC DNA]</scope>
    <source>
        <strain>638</strain>
    </source>
</reference>
<dbReference type="EC" id="3.5.1.105" evidence="1"/>
<dbReference type="EMBL" id="CP000653">
    <property type="protein sequence ID" value="ABP60390.1"/>
    <property type="molecule type" value="Genomic_DNA"/>
</dbReference>
<dbReference type="RefSeq" id="WP_012017106.1">
    <property type="nucleotide sequence ID" value="NC_009436.1"/>
</dbReference>
<dbReference type="SMR" id="A4W9L0"/>
<dbReference type="STRING" id="399742.Ent638_1711"/>
<dbReference type="KEGG" id="ent:Ent638_1711"/>
<dbReference type="eggNOG" id="COG3394">
    <property type="taxonomic scope" value="Bacteria"/>
</dbReference>
<dbReference type="HOGENOM" id="CLU_064244_4_1_6"/>
<dbReference type="OrthoDB" id="9774177at2"/>
<dbReference type="UniPathway" id="UPA00349"/>
<dbReference type="Proteomes" id="UP000000230">
    <property type="component" value="Chromosome"/>
</dbReference>
<dbReference type="GO" id="GO:0005737">
    <property type="term" value="C:cytoplasm"/>
    <property type="evidence" value="ECO:0007669"/>
    <property type="project" value="UniProtKB-SubCell"/>
</dbReference>
<dbReference type="GO" id="GO:0036311">
    <property type="term" value="F:chitin disaccharide deacetylase activity"/>
    <property type="evidence" value="ECO:0007669"/>
    <property type="project" value="UniProtKB-UniRule"/>
</dbReference>
<dbReference type="GO" id="GO:0019213">
    <property type="term" value="F:deacetylase activity"/>
    <property type="evidence" value="ECO:0007669"/>
    <property type="project" value="TreeGrafter"/>
</dbReference>
<dbReference type="GO" id="GO:0046872">
    <property type="term" value="F:metal ion binding"/>
    <property type="evidence" value="ECO:0007669"/>
    <property type="project" value="UniProtKB-KW"/>
</dbReference>
<dbReference type="GO" id="GO:0006032">
    <property type="term" value="P:chitin catabolic process"/>
    <property type="evidence" value="ECO:0007669"/>
    <property type="project" value="UniProtKB-UniPathway"/>
</dbReference>
<dbReference type="GO" id="GO:0052777">
    <property type="term" value="P:diacetylchitobiose catabolic process"/>
    <property type="evidence" value="ECO:0007669"/>
    <property type="project" value="UniProtKB-UniRule"/>
</dbReference>
<dbReference type="GO" id="GO:0000272">
    <property type="term" value="P:polysaccharide catabolic process"/>
    <property type="evidence" value="ECO:0007669"/>
    <property type="project" value="UniProtKB-UniRule"/>
</dbReference>
<dbReference type="CDD" id="cd10803">
    <property type="entry name" value="YdjC_EF3048_like"/>
    <property type="match status" value="1"/>
</dbReference>
<dbReference type="Gene3D" id="3.20.20.370">
    <property type="entry name" value="Glycoside hydrolase/deacetylase"/>
    <property type="match status" value="1"/>
</dbReference>
<dbReference type="HAMAP" id="MF_01246">
    <property type="entry name" value="COD"/>
    <property type="match status" value="1"/>
</dbReference>
<dbReference type="InterPro" id="IPR022948">
    <property type="entry name" value="COD_ChbG_bac"/>
</dbReference>
<dbReference type="InterPro" id="IPR011330">
    <property type="entry name" value="Glyco_hydro/deAcase_b/a-brl"/>
</dbReference>
<dbReference type="InterPro" id="IPR006879">
    <property type="entry name" value="YdjC-like"/>
</dbReference>
<dbReference type="NCBIfam" id="NF002559">
    <property type="entry name" value="PRK02134.1"/>
    <property type="match status" value="1"/>
</dbReference>
<dbReference type="PANTHER" id="PTHR31609:SF1">
    <property type="entry name" value="CARBOHYDRATE DEACETYLASE"/>
    <property type="match status" value="1"/>
</dbReference>
<dbReference type="PANTHER" id="PTHR31609">
    <property type="entry name" value="YDJC DEACETYLASE FAMILY MEMBER"/>
    <property type="match status" value="1"/>
</dbReference>
<dbReference type="Pfam" id="PF04794">
    <property type="entry name" value="YdjC"/>
    <property type="match status" value="1"/>
</dbReference>
<dbReference type="SUPFAM" id="SSF88713">
    <property type="entry name" value="Glycoside hydrolase/deacetylase"/>
    <property type="match status" value="1"/>
</dbReference>
<gene>
    <name evidence="1" type="primary">chbG</name>
    <name type="ordered locus">Ent638_1711</name>
</gene>
<feature type="chain" id="PRO_1000067083" description="Chitooligosaccharide deacetylase">
    <location>
        <begin position="1"/>
        <end position="252"/>
    </location>
</feature>
<feature type="binding site" evidence="1">
    <location>
        <position position="61"/>
    </location>
    <ligand>
        <name>Mg(2+)</name>
        <dbReference type="ChEBI" id="CHEBI:18420"/>
    </ligand>
</feature>
<feature type="binding site" evidence="1">
    <location>
        <position position="125"/>
    </location>
    <ligand>
        <name>Mg(2+)</name>
        <dbReference type="ChEBI" id="CHEBI:18420"/>
    </ligand>
</feature>